<protein>
    <recommendedName>
        <fullName evidence="5">Palmitoyltransferase ZDHHC4</fullName>
        <ecNumber evidence="2">2.3.1.225</ecNumber>
    </recommendedName>
    <alternativeName>
        <fullName evidence="6">Zinc finger DHHC domain-containing protein 4</fullName>
        <shortName>DHHC-4</shortName>
    </alternativeName>
</protein>
<feature type="chain" id="PRO_0000212867" description="Palmitoyltransferase ZDHHC4">
    <location>
        <begin position="1"/>
        <end position="343"/>
    </location>
</feature>
<feature type="topological domain" description="Lumenal" evidence="5">
    <location>
        <begin position="1"/>
        <end position="2"/>
    </location>
</feature>
<feature type="transmembrane region" description="Helical" evidence="3">
    <location>
        <begin position="3"/>
        <end position="23"/>
    </location>
</feature>
<feature type="topological domain" description="Cytoplasmic" evidence="5">
    <location>
        <begin position="24"/>
        <end position="67"/>
    </location>
</feature>
<feature type="transmembrane region" description="Helical" evidence="3">
    <location>
        <begin position="68"/>
        <end position="88"/>
    </location>
</feature>
<feature type="topological domain" description="Lumenal" evidence="5">
    <location>
        <begin position="89"/>
        <end position="95"/>
    </location>
</feature>
<feature type="transmembrane region" description="Helical" evidence="3">
    <location>
        <begin position="96"/>
        <end position="116"/>
    </location>
</feature>
<feature type="topological domain" description="Cytoplasmic" evidence="5">
    <location>
        <begin position="117"/>
        <end position="193"/>
    </location>
</feature>
<feature type="transmembrane region" description="Helical" evidence="3">
    <location>
        <begin position="194"/>
        <end position="214"/>
    </location>
</feature>
<feature type="topological domain" description="Lumenal" evidence="5">
    <location>
        <begin position="215"/>
        <end position="255"/>
    </location>
</feature>
<feature type="transmembrane region" description="Helical" evidence="3">
    <location>
        <begin position="256"/>
        <end position="276"/>
    </location>
</feature>
<feature type="topological domain" description="Cytoplasmic" evidence="5">
    <location>
        <begin position="277"/>
        <end position="343"/>
    </location>
</feature>
<feature type="domain" description="DHHC" evidence="4">
    <location>
        <begin position="149"/>
        <end position="199"/>
    </location>
</feature>
<feature type="short sequence motif" description="Di-lysine motif" evidence="2">
    <location>
        <begin position="340"/>
        <end position="343"/>
    </location>
</feature>
<feature type="active site" description="S-palmitoyl cysteine intermediate" evidence="4">
    <location>
        <position position="179"/>
    </location>
</feature>
<comment type="function">
    <text evidence="2">Palmitoyltransferase that could catalyze the addition of palmitate onto protein substrates including the D(2) dopamine receptor DRD2, GSK3B or MAVS. Mediates GSK3B palmitoylation to prevent its AKT1-mediated phosphorylation leading to activation of the STAT3 signaling pathway. Also catalyzes MAVS palmitoylation which promotes its stabilization and activation by inhibiting 'Lys-48'- but facilitating 'Lys-63'-linked ubiquitination.</text>
</comment>
<comment type="catalytic activity">
    <reaction evidence="2">
        <text>L-cysteinyl-[protein] + hexadecanoyl-CoA = S-hexadecanoyl-L-cysteinyl-[protein] + CoA</text>
        <dbReference type="Rhea" id="RHEA:36683"/>
        <dbReference type="Rhea" id="RHEA-COMP:10131"/>
        <dbReference type="Rhea" id="RHEA-COMP:11032"/>
        <dbReference type="ChEBI" id="CHEBI:29950"/>
        <dbReference type="ChEBI" id="CHEBI:57287"/>
        <dbReference type="ChEBI" id="CHEBI:57379"/>
        <dbReference type="ChEBI" id="CHEBI:74151"/>
        <dbReference type="EC" id="2.3.1.225"/>
    </reaction>
    <physiologicalReaction direction="left-to-right" evidence="2">
        <dbReference type="Rhea" id="RHEA:36684"/>
    </physiologicalReaction>
</comment>
<comment type="subunit">
    <text evidence="2">Interacts with CPT1A.</text>
</comment>
<comment type="subcellular location">
    <subcellularLocation>
        <location evidence="2">Endoplasmic reticulum membrane</location>
        <topology evidence="3">Multi-pass membrane protein</topology>
    </subcellularLocation>
    <subcellularLocation>
        <location evidence="2">Golgi apparatus membrane</location>
        <topology evidence="3">Multi-pass membrane protein</topology>
    </subcellularLocation>
    <subcellularLocation>
        <location evidence="2">Cell membrane</location>
        <topology evidence="3">Multi-pass membrane protein</topology>
    </subcellularLocation>
</comment>
<comment type="domain">
    <text evidence="2">The C-terminal di-lysine motif confers endoplasmic reticulum localization.</text>
</comment>
<comment type="domain">
    <text evidence="1">The DHHC domain is required for palmitoyltransferase activity.</text>
</comment>
<comment type="similarity">
    <text evidence="5">Belongs to the DHHC palmitoyltransferase family.</text>
</comment>
<accession>Q5FVR1</accession>
<accession>Q2TGK2</accession>
<name>ZDHC4_RAT</name>
<organism>
    <name type="scientific">Rattus norvegicus</name>
    <name type="common">Rat</name>
    <dbReference type="NCBI Taxonomy" id="10116"/>
    <lineage>
        <taxon>Eukaryota</taxon>
        <taxon>Metazoa</taxon>
        <taxon>Chordata</taxon>
        <taxon>Craniata</taxon>
        <taxon>Vertebrata</taxon>
        <taxon>Euteleostomi</taxon>
        <taxon>Mammalia</taxon>
        <taxon>Eutheria</taxon>
        <taxon>Euarchontoglires</taxon>
        <taxon>Glires</taxon>
        <taxon>Rodentia</taxon>
        <taxon>Myomorpha</taxon>
        <taxon>Muroidea</taxon>
        <taxon>Muridae</taxon>
        <taxon>Murinae</taxon>
        <taxon>Rattus</taxon>
    </lineage>
</organism>
<sequence length="343" mass="39397">MDFLVLFSFYLAFLLICVIMICIFTKSQRLKAVVLGGAQVCARVTPQCFQRAVQTLLHQLFHTRHPAFLALHLLLQGLVYAEYTYEVFSYCRELEFSLPCLLLPYVLLSVNLVFFTLTCSTNPGTITKTNVLLLLQVYEFDEVMFPKNSRCSTCDLRKPARSKHCRVCDRCVHRFDHHCVWVNNCIGAWNTGYFLIYLLTLTASAATIAILSAAFLLRLVAVSNLYQETYLDDLGRFQAVDTGFLIQHLFLAFPRIIFLLGFVIVLSLLLAGYLCFALYLAATNQTTNEWYRGDWAWCQHWPLVAWSPSAEPQIHQNIYSHGLWSNLQEVFIPATPSYKKKKR</sequence>
<reference key="1">
    <citation type="submission" date="2005-01" db="EMBL/GenBank/DDBJ databases">
        <title>A superfamily of membrane-associated DHHC type zinc finger proteins.</title>
        <authorList>
            <person name="Huang C.-H."/>
            <person name="Chen Y."/>
            <person name="Ye T."/>
        </authorList>
    </citation>
    <scope>NUCLEOTIDE SEQUENCE [MRNA]</scope>
</reference>
<reference key="2">
    <citation type="journal article" date="2004" name="Genome Res.">
        <title>The status, quality, and expansion of the NIH full-length cDNA project: the Mammalian Gene Collection (MGC).</title>
        <authorList>
            <consortium name="The MGC Project Team"/>
        </authorList>
    </citation>
    <scope>NUCLEOTIDE SEQUENCE [LARGE SCALE MRNA]</scope>
    <source>
        <tissue>Liver</tissue>
    </source>
</reference>
<keyword id="KW-0012">Acyltransferase</keyword>
<keyword id="KW-1003">Cell membrane</keyword>
<keyword id="KW-0256">Endoplasmic reticulum</keyword>
<keyword id="KW-0333">Golgi apparatus</keyword>
<keyword id="KW-0449">Lipoprotein</keyword>
<keyword id="KW-0472">Membrane</keyword>
<keyword id="KW-0564">Palmitate</keyword>
<keyword id="KW-1185">Reference proteome</keyword>
<keyword id="KW-0808">Transferase</keyword>
<keyword id="KW-0812">Transmembrane</keyword>
<keyword id="KW-1133">Transmembrane helix</keyword>
<proteinExistence type="evidence at transcript level"/>
<dbReference type="EC" id="2.3.1.225" evidence="2"/>
<dbReference type="EMBL" id="AY886523">
    <property type="protein sequence ID" value="AAX73385.1"/>
    <property type="molecule type" value="mRNA"/>
</dbReference>
<dbReference type="EMBL" id="BC089831">
    <property type="protein sequence ID" value="AAH89831.1"/>
    <property type="molecule type" value="mRNA"/>
</dbReference>
<dbReference type="RefSeq" id="NP_001013141.1">
    <property type="nucleotide sequence ID" value="NM_001013123.1"/>
</dbReference>
<dbReference type="FunCoup" id="Q5FVR1">
    <property type="interactions" value="1663"/>
</dbReference>
<dbReference type="STRING" id="10116.ENSRNOP00000073588"/>
<dbReference type="PhosphoSitePlus" id="Q5FVR1"/>
<dbReference type="PaxDb" id="10116-ENSRNOP00000001447"/>
<dbReference type="GeneID" id="304291"/>
<dbReference type="KEGG" id="rno:304291"/>
<dbReference type="AGR" id="RGD:1308389"/>
<dbReference type="CTD" id="55146"/>
<dbReference type="RGD" id="1308389">
    <property type="gene designation" value="Zdhhc4"/>
</dbReference>
<dbReference type="eggNOG" id="KOG1312">
    <property type="taxonomic scope" value="Eukaryota"/>
</dbReference>
<dbReference type="InParanoid" id="Q5FVR1"/>
<dbReference type="PhylomeDB" id="Q5FVR1"/>
<dbReference type="PRO" id="PR:Q5FVR1"/>
<dbReference type="Proteomes" id="UP000002494">
    <property type="component" value="Unplaced"/>
</dbReference>
<dbReference type="GO" id="GO:0005783">
    <property type="term" value="C:endoplasmic reticulum"/>
    <property type="evidence" value="ECO:0000250"/>
    <property type="project" value="UniProtKB"/>
</dbReference>
<dbReference type="GO" id="GO:0005789">
    <property type="term" value="C:endoplasmic reticulum membrane"/>
    <property type="evidence" value="ECO:0007669"/>
    <property type="project" value="UniProtKB-SubCell"/>
</dbReference>
<dbReference type="GO" id="GO:0005794">
    <property type="term" value="C:Golgi apparatus"/>
    <property type="evidence" value="ECO:0000266"/>
    <property type="project" value="RGD"/>
</dbReference>
<dbReference type="GO" id="GO:0000139">
    <property type="term" value="C:Golgi membrane"/>
    <property type="evidence" value="ECO:0007669"/>
    <property type="project" value="UniProtKB-SubCell"/>
</dbReference>
<dbReference type="GO" id="GO:0005886">
    <property type="term" value="C:plasma membrane"/>
    <property type="evidence" value="ECO:0007669"/>
    <property type="project" value="UniProtKB-SubCell"/>
</dbReference>
<dbReference type="GO" id="GO:0016409">
    <property type="term" value="F:palmitoyltransferase activity"/>
    <property type="evidence" value="ECO:0000266"/>
    <property type="project" value="RGD"/>
</dbReference>
<dbReference type="GO" id="GO:0019706">
    <property type="term" value="F:protein-cysteine S-palmitoyltransferase activity"/>
    <property type="evidence" value="ECO:0000318"/>
    <property type="project" value="GO_Central"/>
</dbReference>
<dbReference type="GO" id="GO:0045089">
    <property type="term" value="P:positive regulation of innate immune response"/>
    <property type="evidence" value="ECO:0000266"/>
    <property type="project" value="RGD"/>
</dbReference>
<dbReference type="GO" id="GO:0072659">
    <property type="term" value="P:protein localization to plasma membrane"/>
    <property type="evidence" value="ECO:0000266"/>
    <property type="project" value="RGD"/>
</dbReference>
<dbReference type="GO" id="GO:0006612">
    <property type="term" value="P:protein targeting to membrane"/>
    <property type="evidence" value="ECO:0000318"/>
    <property type="project" value="GO_Central"/>
</dbReference>
<dbReference type="InterPro" id="IPR001594">
    <property type="entry name" value="Palmitoyltrfase_DHHC"/>
</dbReference>
<dbReference type="InterPro" id="IPR039859">
    <property type="entry name" value="PFA4/ZDH16/20/ERF2-like"/>
</dbReference>
<dbReference type="PANTHER" id="PTHR22883:SF466">
    <property type="entry name" value="PALMITOYLTRANSFERASE ZDHHC4"/>
    <property type="match status" value="1"/>
</dbReference>
<dbReference type="PANTHER" id="PTHR22883">
    <property type="entry name" value="ZINC FINGER DHHC DOMAIN CONTAINING PROTEIN"/>
    <property type="match status" value="1"/>
</dbReference>
<dbReference type="Pfam" id="PF01529">
    <property type="entry name" value="DHHC"/>
    <property type="match status" value="1"/>
</dbReference>
<dbReference type="PROSITE" id="PS50216">
    <property type="entry name" value="DHHC"/>
    <property type="match status" value="1"/>
</dbReference>
<evidence type="ECO:0000250" key="1">
    <source>
        <dbReference type="UniProtKB" id="Q8IUH5"/>
    </source>
</evidence>
<evidence type="ECO:0000250" key="2">
    <source>
        <dbReference type="UniProtKB" id="Q9NPG8"/>
    </source>
</evidence>
<evidence type="ECO:0000255" key="3"/>
<evidence type="ECO:0000255" key="4">
    <source>
        <dbReference type="PROSITE-ProRule" id="PRU00067"/>
    </source>
</evidence>
<evidence type="ECO:0000305" key="5"/>
<evidence type="ECO:0000312" key="6">
    <source>
        <dbReference type="RGD" id="1308389"/>
    </source>
</evidence>
<gene>
    <name evidence="6" type="primary">Zdhhc4</name>
</gene>